<feature type="chain" id="PRO_0000151683" description="Hydroxylamine reductase">
    <location>
        <begin position="1"/>
        <end position="552"/>
    </location>
</feature>
<feature type="binding site" evidence="1">
    <location>
        <position position="5"/>
    </location>
    <ligand>
        <name>[2Fe-2S] cluster</name>
        <dbReference type="ChEBI" id="CHEBI:190135"/>
    </ligand>
</feature>
<feature type="binding site" evidence="1">
    <location>
        <position position="8"/>
    </location>
    <ligand>
        <name>[2Fe-2S] cluster</name>
        <dbReference type="ChEBI" id="CHEBI:190135"/>
    </ligand>
</feature>
<feature type="binding site" evidence="1">
    <location>
        <position position="20"/>
    </location>
    <ligand>
        <name>[2Fe-2S] cluster</name>
        <dbReference type="ChEBI" id="CHEBI:190135"/>
    </ligand>
</feature>
<feature type="binding site" evidence="1">
    <location>
        <position position="27"/>
    </location>
    <ligand>
        <name>[2Fe-2S] cluster</name>
        <dbReference type="ChEBI" id="CHEBI:190135"/>
    </ligand>
</feature>
<feature type="binding site" evidence="1">
    <location>
        <position position="251"/>
    </location>
    <ligand>
        <name>hybrid [4Fe-2O-2S] cluster</name>
        <dbReference type="ChEBI" id="CHEBI:60519"/>
    </ligand>
</feature>
<feature type="binding site" evidence="1">
    <location>
        <position position="275"/>
    </location>
    <ligand>
        <name>hybrid [4Fe-2O-2S] cluster</name>
        <dbReference type="ChEBI" id="CHEBI:60519"/>
    </ligand>
</feature>
<feature type="binding site" evidence="1">
    <location>
        <position position="319"/>
    </location>
    <ligand>
        <name>hybrid [4Fe-2O-2S] cluster</name>
        <dbReference type="ChEBI" id="CHEBI:60519"/>
    </ligand>
</feature>
<feature type="binding site" description="via persulfide group" evidence="1">
    <location>
        <position position="407"/>
    </location>
    <ligand>
        <name>hybrid [4Fe-2O-2S] cluster</name>
        <dbReference type="ChEBI" id="CHEBI:60519"/>
    </ligand>
</feature>
<feature type="binding site" evidence="1">
    <location>
        <position position="435"/>
    </location>
    <ligand>
        <name>hybrid [4Fe-2O-2S] cluster</name>
        <dbReference type="ChEBI" id="CHEBI:60519"/>
    </ligand>
</feature>
<feature type="binding site" evidence="1">
    <location>
        <position position="460"/>
    </location>
    <ligand>
        <name>hybrid [4Fe-2O-2S] cluster</name>
        <dbReference type="ChEBI" id="CHEBI:60519"/>
    </ligand>
</feature>
<feature type="binding site" evidence="1">
    <location>
        <position position="494"/>
    </location>
    <ligand>
        <name>hybrid [4Fe-2O-2S] cluster</name>
        <dbReference type="ChEBI" id="CHEBI:60519"/>
    </ligand>
</feature>
<feature type="binding site" evidence="1">
    <location>
        <position position="496"/>
    </location>
    <ligand>
        <name>hybrid [4Fe-2O-2S] cluster</name>
        <dbReference type="ChEBI" id="CHEBI:60519"/>
    </ligand>
</feature>
<feature type="modified residue" description="Cysteine persulfide" evidence="1">
    <location>
        <position position="407"/>
    </location>
</feature>
<name>HCP_SHIFL</name>
<accession>Q83S05</accession>
<sequence length="552" mass="60391">MIMFCVQCEQTIRTPAENGCSYAQGMCGKTAETSDLQDLLIAALQGLSAWAVKAREYGIINHDVDSFAPRAFFSTLTNVNFDSPRIVGYAREAIALREALKAQCLAVDANARVDNPMADLQLVSDDLGELQRQAAEFTPNKDKAAIGENILGLRLLCLYGLKGAAAYMEHAHVLGQYDNDIYAQYHKIMAWLGTWPADMNALLECSMEIGQMNFKVMSILDAGETGKYGHPTPTQVNVKATAGKCILISGHDLKDLYNLLEQTEGTGVNVYTHGEMLPAHGYPELRKFKHLVGNYGSGWQNQQVEFARFPGPIVMTSNCIIDPTVGAYDDRIWTRSIVGWPGVRHLDGEDFSAVIAQAQQMAGFPYSEIPHLITVGFGRQTLLGAADTLIDLVSREKLRHIFLLGGCDGARGERHYFTDFATSVPDDCLILTLACGKYRFNKLEFGDIEGLPRLVDAGQCNDAYSAIILAVTLAEKLGCGVNDLPLSLVLSWFEQKAIVILLTLLSLGVKNIVTGPTAPGFLTPDLLAVLNEKFGLRSITTVEEDMKQLLNA</sequence>
<proteinExistence type="inferred from homology"/>
<evidence type="ECO:0000255" key="1">
    <source>
        <dbReference type="HAMAP-Rule" id="MF_00069"/>
    </source>
</evidence>
<protein>
    <recommendedName>
        <fullName evidence="1">Hydroxylamine reductase</fullName>
        <ecNumber evidence="1">1.7.99.1</ecNumber>
    </recommendedName>
    <alternativeName>
        <fullName evidence="1">Hybrid-cluster protein</fullName>
        <shortName evidence="1">HCP</shortName>
    </alternativeName>
    <alternativeName>
        <fullName evidence="1">Prismane protein</fullName>
    </alternativeName>
</protein>
<comment type="function">
    <text evidence="1">Catalyzes the reduction of hydroxylamine to form NH(3) and H(2)O.</text>
</comment>
<comment type="catalytic activity">
    <reaction evidence="1">
        <text>A + NH4(+) + H2O = hydroxylamine + AH2 + H(+)</text>
        <dbReference type="Rhea" id="RHEA:22052"/>
        <dbReference type="ChEBI" id="CHEBI:13193"/>
        <dbReference type="ChEBI" id="CHEBI:15377"/>
        <dbReference type="ChEBI" id="CHEBI:15378"/>
        <dbReference type="ChEBI" id="CHEBI:15429"/>
        <dbReference type="ChEBI" id="CHEBI:17499"/>
        <dbReference type="ChEBI" id="CHEBI:28938"/>
        <dbReference type="EC" id="1.7.99.1"/>
    </reaction>
</comment>
<comment type="cofactor">
    <cofactor evidence="1">
        <name>[2Fe-2S] cluster</name>
        <dbReference type="ChEBI" id="CHEBI:190135"/>
    </cofactor>
    <text evidence="1">Binds 1 [2Fe-2S] cluster.</text>
</comment>
<comment type="cofactor">
    <cofactor evidence="1">
        <name>hybrid [4Fe-2O-2S] cluster</name>
        <dbReference type="ChEBI" id="CHEBI:60519"/>
    </cofactor>
    <text evidence="1">Binds 1 hybrid [4Fe-2O-2S] cluster.</text>
</comment>
<comment type="subcellular location">
    <subcellularLocation>
        <location evidence="1">Cytoplasm</location>
    </subcellularLocation>
</comment>
<comment type="similarity">
    <text evidence="1">Belongs to the HCP family.</text>
</comment>
<dbReference type="EC" id="1.7.99.1" evidence="1"/>
<dbReference type="EMBL" id="AE005674">
    <property type="protein sequence ID" value="AAN42461.1"/>
    <property type="molecule type" value="Genomic_DNA"/>
</dbReference>
<dbReference type="EMBL" id="AE014073">
    <property type="protein sequence ID" value="AAP16334.1"/>
    <property type="molecule type" value="Genomic_DNA"/>
</dbReference>
<dbReference type="SMR" id="Q83S05"/>
<dbReference type="STRING" id="198214.SF0828"/>
<dbReference type="PaxDb" id="198214-SF0828"/>
<dbReference type="KEGG" id="sfl:SF0828"/>
<dbReference type="KEGG" id="sfx:S0869"/>
<dbReference type="PATRIC" id="fig|198214.7.peg.957"/>
<dbReference type="HOGENOM" id="CLU_038344_2_0_6"/>
<dbReference type="Proteomes" id="UP000001006">
    <property type="component" value="Chromosome"/>
</dbReference>
<dbReference type="Proteomes" id="UP000002673">
    <property type="component" value="Chromosome"/>
</dbReference>
<dbReference type="GO" id="GO:0005737">
    <property type="term" value="C:cytoplasm"/>
    <property type="evidence" value="ECO:0007669"/>
    <property type="project" value="UniProtKB-SubCell"/>
</dbReference>
<dbReference type="GO" id="GO:0051537">
    <property type="term" value="F:2 iron, 2 sulfur cluster binding"/>
    <property type="evidence" value="ECO:0007669"/>
    <property type="project" value="UniProtKB-KW"/>
</dbReference>
<dbReference type="GO" id="GO:0050418">
    <property type="term" value="F:hydroxylamine reductase activity"/>
    <property type="evidence" value="ECO:0007669"/>
    <property type="project" value="UniProtKB-UniRule"/>
</dbReference>
<dbReference type="GO" id="GO:0046872">
    <property type="term" value="F:metal ion binding"/>
    <property type="evidence" value="ECO:0007669"/>
    <property type="project" value="UniProtKB-KW"/>
</dbReference>
<dbReference type="GO" id="GO:0004601">
    <property type="term" value="F:peroxidase activity"/>
    <property type="evidence" value="ECO:0007669"/>
    <property type="project" value="TreeGrafter"/>
</dbReference>
<dbReference type="GO" id="GO:0042542">
    <property type="term" value="P:response to hydrogen peroxide"/>
    <property type="evidence" value="ECO:0007669"/>
    <property type="project" value="TreeGrafter"/>
</dbReference>
<dbReference type="CDD" id="cd01914">
    <property type="entry name" value="HCP"/>
    <property type="match status" value="1"/>
</dbReference>
<dbReference type="FunFam" id="1.20.1270.20:FF:000001">
    <property type="entry name" value="Hydroxylamine reductase"/>
    <property type="match status" value="1"/>
</dbReference>
<dbReference type="FunFam" id="1.20.1270.20:FF:000002">
    <property type="entry name" value="Hydroxylamine reductase"/>
    <property type="match status" value="1"/>
</dbReference>
<dbReference type="FunFam" id="3.40.50.2030:FF:000001">
    <property type="entry name" value="Hydroxylamine reductase"/>
    <property type="match status" value="1"/>
</dbReference>
<dbReference type="FunFam" id="3.40.50.2030:FF:000002">
    <property type="entry name" value="Hydroxylamine reductase"/>
    <property type="match status" value="1"/>
</dbReference>
<dbReference type="Gene3D" id="1.20.1270.20">
    <property type="match status" value="2"/>
</dbReference>
<dbReference type="Gene3D" id="3.40.50.2030">
    <property type="match status" value="2"/>
</dbReference>
<dbReference type="HAMAP" id="MF_00069">
    <property type="entry name" value="Hydroxylam_reduct"/>
    <property type="match status" value="1"/>
</dbReference>
<dbReference type="InterPro" id="IPR004137">
    <property type="entry name" value="HCP/CODH"/>
</dbReference>
<dbReference type="InterPro" id="IPR010048">
    <property type="entry name" value="Hydroxylam_reduct"/>
</dbReference>
<dbReference type="InterPro" id="IPR016099">
    <property type="entry name" value="Prismane-like_a/b-sand"/>
</dbReference>
<dbReference type="InterPro" id="IPR011254">
    <property type="entry name" value="Prismane-like_sf"/>
</dbReference>
<dbReference type="InterPro" id="IPR016100">
    <property type="entry name" value="Prismane_a-bundle"/>
</dbReference>
<dbReference type="NCBIfam" id="TIGR01703">
    <property type="entry name" value="hybrid_clust"/>
    <property type="match status" value="1"/>
</dbReference>
<dbReference type="NCBIfam" id="NF003658">
    <property type="entry name" value="PRK05290.1"/>
    <property type="match status" value="1"/>
</dbReference>
<dbReference type="PANTHER" id="PTHR30109">
    <property type="entry name" value="HYDROXYLAMINE REDUCTASE"/>
    <property type="match status" value="1"/>
</dbReference>
<dbReference type="PANTHER" id="PTHR30109:SF0">
    <property type="entry name" value="HYDROXYLAMINE REDUCTASE"/>
    <property type="match status" value="1"/>
</dbReference>
<dbReference type="Pfam" id="PF03063">
    <property type="entry name" value="Prismane"/>
    <property type="match status" value="1"/>
</dbReference>
<dbReference type="PIRSF" id="PIRSF000076">
    <property type="entry name" value="HCP"/>
    <property type="match status" value="1"/>
</dbReference>
<dbReference type="SUPFAM" id="SSF56821">
    <property type="entry name" value="Prismane protein-like"/>
    <property type="match status" value="1"/>
</dbReference>
<reference key="1">
    <citation type="journal article" date="2002" name="Nucleic Acids Res.">
        <title>Genome sequence of Shigella flexneri 2a: insights into pathogenicity through comparison with genomes of Escherichia coli K12 and O157.</title>
        <authorList>
            <person name="Jin Q."/>
            <person name="Yuan Z."/>
            <person name="Xu J."/>
            <person name="Wang Y."/>
            <person name="Shen Y."/>
            <person name="Lu W."/>
            <person name="Wang J."/>
            <person name="Liu H."/>
            <person name="Yang J."/>
            <person name="Yang F."/>
            <person name="Zhang X."/>
            <person name="Zhang J."/>
            <person name="Yang G."/>
            <person name="Wu H."/>
            <person name="Qu D."/>
            <person name="Dong J."/>
            <person name="Sun L."/>
            <person name="Xue Y."/>
            <person name="Zhao A."/>
            <person name="Gao Y."/>
            <person name="Zhu J."/>
            <person name="Kan B."/>
            <person name="Ding K."/>
            <person name="Chen S."/>
            <person name="Cheng H."/>
            <person name="Yao Z."/>
            <person name="He B."/>
            <person name="Chen R."/>
            <person name="Ma D."/>
            <person name="Qiang B."/>
            <person name="Wen Y."/>
            <person name="Hou Y."/>
            <person name="Yu J."/>
        </authorList>
    </citation>
    <scope>NUCLEOTIDE SEQUENCE [LARGE SCALE GENOMIC DNA]</scope>
    <source>
        <strain>301 / Serotype 2a</strain>
    </source>
</reference>
<reference key="2">
    <citation type="journal article" date="2003" name="Infect. Immun.">
        <title>Complete genome sequence and comparative genomics of Shigella flexneri serotype 2a strain 2457T.</title>
        <authorList>
            <person name="Wei J."/>
            <person name="Goldberg M.B."/>
            <person name="Burland V."/>
            <person name="Venkatesan M.M."/>
            <person name="Deng W."/>
            <person name="Fournier G."/>
            <person name="Mayhew G.F."/>
            <person name="Plunkett G. III"/>
            <person name="Rose D.J."/>
            <person name="Darling A."/>
            <person name="Mau B."/>
            <person name="Perna N.T."/>
            <person name="Payne S.M."/>
            <person name="Runyen-Janecky L.J."/>
            <person name="Zhou S."/>
            <person name="Schwartz D.C."/>
            <person name="Blattner F.R."/>
        </authorList>
    </citation>
    <scope>NUCLEOTIDE SEQUENCE [LARGE SCALE GENOMIC DNA]</scope>
    <source>
        <strain>ATCC 700930 / 2457T / Serotype 2a</strain>
    </source>
</reference>
<keyword id="KW-0001">2Fe-2S</keyword>
<keyword id="KW-0963">Cytoplasm</keyword>
<keyword id="KW-0408">Iron</keyword>
<keyword id="KW-0411">Iron-sulfur</keyword>
<keyword id="KW-0479">Metal-binding</keyword>
<keyword id="KW-0560">Oxidoreductase</keyword>
<keyword id="KW-1185">Reference proteome</keyword>
<gene>
    <name evidence="1" type="primary">hcp</name>
    <name type="ordered locus">SF0828</name>
    <name type="ordered locus">S0869</name>
</gene>
<organism>
    <name type="scientific">Shigella flexneri</name>
    <dbReference type="NCBI Taxonomy" id="623"/>
    <lineage>
        <taxon>Bacteria</taxon>
        <taxon>Pseudomonadati</taxon>
        <taxon>Pseudomonadota</taxon>
        <taxon>Gammaproteobacteria</taxon>
        <taxon>Enterobacterales</taxon>
        <taxon>Enterobacteriaceae</taxon>
        <taxon>Shigella</taxon>
    </lineage>
</organism>